<protein>
    <recommendedName>
        <fullName>Succinyl-diaminopimelate desuccinylase</fullName>
        <shortName>SDAP desuccinylase</shortName>
        <ecNumber>3.5.1.18</ecNumber>
    </recommendedName>
    <alternativeName>
        <fullName>N-succinyl-LL-2,6-diaminoheptanedioate amidohydrolase</fullName>
    </alternativeName>
</protein>
<sequence>MTETQSLELAKELISRPSVTPDDRDCQKLLAERLHKIGFAAEELHFGDTKNIWLRRGTKAPVVCFAGHTDVVPTGPVEKWDSPPFEPAERDGRLYGRGAADMKTSIACFVTACERFVAKHPNHQGSIALLITSDEEGDALDGTTKVVDVLKARDELIDYCIVGEPTAVDKLGDMIKNGRRGSLSGNLTVKGKQGHIAYPHLAINPVHTFAPALLELTQEVWDEGNEYFPPTSFQISNINGGTGATNVIPGELNVKFNFRFSTESTEAGLKQRVHAILDKHGVQYDLQWSCSGQPFLTQAGKLTDVARAAIAETCGIEAELSTTGGTSDGRFIKAIAQELIELGPSNATIHQINENVRLNDIPKLSAVYEGILARLLAGNAV</sequence>
<evidence type="ECO:0000250" key="1"/>
<evidence type="ECO:0000255" key="2">
    <source>
        <dbReference type="HAMAP-Rule" id="MF_01690"/>
    </source>
</evidence>
<evidence type="ECO:0000269" key="3">
    <source>
    </source>
</evidence>
<evidence type="ECO:0000305" key="4"/>
<evidence type="ECO:0007829" key="5">
    <source>
        <dbReference type="PDB" id="4PPZ"/>
    </source>
</evidence>
<evidence type="ECO:0007829" key="6">
    <source>
        <dbReference type="PDB" id="5UEJ"/>
    </source>
</evidence>
<comment type="function">
    <text evidence="1">Catalyzes the hydrolysis of N-succinyl-L,L-diaminopimelic acid (SDAP), forming succinate and LL-2,6-diaminopimelate (DAP), an intermediate involved in the bacterial biosynthesis of lysine and meso-diaminopimelic acid, an essential component of bacterial cell walls.</text>
</comment>
<comment type="catalytic activity">
    <reaction>
        <text>N-succinyl-(2S,6S)-2,6-diaminopimelate + H2O = (2S,6S)-2,6-diaminopimelate + succinate</text>
        <dbReference type="Rhea" id="RHEA:22608"/>
        <dbReference type="ChEBI" id="CHEBI:15377"/>
        <dbReference type="ChEBI" id="CHEBI:30031"/>
        <dbReference type="ChEBI" id="CHEBI:57609"/>
        <dbReference type="ChEBI" id="CHEBI:58087"/>
        <dbReference type="EC" id="3.5.1.18"/>
    </reaction>
</comment>
<comment type="cofactor">
    <cofactor evidence="2">
        <name>Zn(2+)</name>
        <dbReference type="ChEBI" id="CHEBI:29105"/>
    </cofactor>
    <cofactor evidence="2">
        <name>Co(2+)</name>
        <dbReference type="ChEBI" id="CHEBI:48828"/>
    </cofactor>
    <text evidence="2">Binds 2 Zn(2+) or Co(2+) ions per subunit.</text>
</comment>
<comment type="pathway">
    <text>Amino-acid biosynthesis; L-lysine biosynthesis via DAP pathway; LL-2,6-diaminopimelate from (S)-tetrahydrodipicolinate (succinylase route): step 3/3.</text>
</comment>
<comment type="subunit">
    <text evidence="3">Homodimer.</text>
</comment>
<comment type="similarity">
    <text evidence="4">Belongs to the peptidase M20A family. DapE subfamily.</text>
</comment>
<keyword id="KW-0002">3D-structure</keyword>
<keyword id="KW-0028">Amino-acid biosynthesis</keyword>
<keyword id="KW-0170">Cobalt</keyword>
<keyword id="KW-0220">Diaminopimelate biosynthesis</keyword>
<keyword id="KW-0378">Hydrolase</keyword>
<keyword id="KW-0457">Lysine biosynthesis</keyword>
<keyword id="KW-0479">Metal-binding</keyword>
<keyword id="KW-1185">Reference proteome</keyword>
<keyword id="KW-0862">Zinc</keyword>
<name>DAPE_NEIMB</name>
<gene>
    <name type="primary">dapE</name>
    <name type="ordered locus">NMB1530</name>
</gene>
<proteinExistence type="evidence at protein level"/>
<reference key="1">
    <citation type="journal article" date="2000" name="Science">
        <title>Complete genome sequence of Neisseria meningitidis serogroup B strain MC58.</title>
        <authorList>
            <person name="Tettelin H."/>
            <person name="Saunders N.J."/>
            <person name="Heidelberg J.F."/>
            <person name="Jeffries A.C."/>
            <person name="Nelson K.E."/>
            <person name="Eisen J.A."/>
            <person name="Ketchum K.A."/>
            <person name="Hood D.W."/>
            <person name="Peden J.F."/>
            <person name="Dodson R.J."/>
            <person name="Nelson W.C."/>
            <person name="Gwinn M.L."/>
            <person name="DeBoy R.T."/>
            <person name="Peterson J.D."/>
            <person name="Hickey E.K."/>
            <person name="Haft D.H."/>
            <person name="Salzberg S.L."/>
            <person name="White O."/>
            <person name="Fleischmann R.D."/>
            <person name="Dougherty B.A."/>
            <person name="Mason T.M."/>
            <person name="Ciecko A."/>
            <person name="Parksey D.S."/>
            <person name="Blair E."/>
            <person name="Cittone H."/>
            <person name="Clark E.B."/>
            <person name="Cotton M.D."/>
            <person name="Utterback T.R."/>
            <person name="Khouri H.M."/>
            <person name="Qin H."/>
            <person name="Vamathevan J.J."/>
            <person name="Gill J."/>
            <person name="Scarlato V."/>
            <person name="Masignani V."/>
            <person name="Pizza M."/>
            <person name="Grandi G."/>
            <person name="Sun L."/>
            <person name="Smith H.O."/>
            <person name="Fraser C.M."/>
            <person name="Moxon E.R."/>
            <person name="Rappuoli R."/>
            <person name="Venter J.C."/>
        </authorList>
    </citation>
    <scope>NUCLEOTIDE SEQUENCE [LARGE SCALE GENOMIC DNA]</scope>
    <source>
        <strain>ATCC BAA-335 / MC58</strain>
    </source>
</reference>
<reference key="2">
    <citation type="journal article" date="2005" name="Proteins">
        <title>Structural analysis of a set of proteins resulting from a bacterial genomics project.</title>
        <authorList>
            <person name="Badger J."/>
            <person name="Sauder J.M."/>
            <person name="Adams J.M."/>
            <person name="Antonysamy S."/>
            <person name="Bain K."/>
            <person name="Bergseid M.G."/>
            <person name="Buchanan S.G."/>
            <person name="Buchanan M.D."/>
            <person name="Batiyenko Y."/>
            <person name="Christopher J.A."/>
            <person name="Emtage S."/>
            <person name="Eroshkina A."/>
            <person name="Feil I."/>
            <person name="Furlong E.B."/>
            <person name="Gajiwala K.S."/>
            <person name="Gao X."/>
            <person name="He D."/>
            <person name="Hendle J."/>
            <person name="Huber A."/>
            <person name="Hoda K."/>
            <person name="Kearins P."/>
            <person name="Kissinger C."/>
            <person name="Laubert B."/>
            <person name="Lewis H.A."/>
            <person name="Lin J."/>
            <person name="Loomis K."/>
            <person name="Lorimer D."/>
            <person name="Louie G."/>
            <person name="Maletic M."/>
            <person name="Marsh C.D."/>
            <person name="Miller I."/>
            <person name="Molinari J."/>
            <person name="Muller-Dieckmann H.J."/>
            <person name="Newman J.M."/>
            <person name="Noland B.W."/>
            <person name="Pagarigan B."/>
            <person name="Park F."/>
            <person name="Peat T.S."/>
            <person name="Post K.W."/>
            <person name="Radojicic S."/>
            <person name="Ramos A."/>
            <person name="Romero R."/>
            <person name="Rutter M.E."/>
            <person name="Sanderson W.E."/>
            <person name="Schwinn K.D."/>
            <person name="Tresser J."/>
            <person name="Winhoven J."/>
            <person name="Wright T.A."/>
            <person name="Wu L."/>
            <person name="Xu J."/>
            <person name="Harris T.J.R."/>
        </authorList>
    </citation>
    <scope>X-RAY CRYSTALLOGRAPHY (1.9 ANGSTROMS)</scope>
    <scope>SUBUNIT</scope>
</reference>
<accession>Q9JYL2</accession>
<feature type="chain" id="PRO_0000375624" description="Succinyl-diaminopimelate desuccinylase">
    <location>
        <begin position="1"/>
        <end position="381"/>
    </location>
</feature>
<feature type="active site" evidence="1">
    <location>
        <position position="70"/>
    </location>
</feature>
<feature type="active site" description="Proton acceptor" evidence="1">
    <location>
        <position position="135"/>
    </location>
</feature>
<feature type="binding site" evidence="1">
    <location>
        <position position="68"/>
    </location>
    <ligand>
        <name>Zn(2+)</name>
        <dbReference type="ChEBI" id="CHEBI:29105"/>
        <label>1</label>
    </ligand>
</feature>
<feature type="binding site" evidence="1">
    <location>
        <position position="101"/>
    </location>
    <ligand>
        <name>Zn(2+)</name>
        <dbReference type="ChEBI" id="CHEBI:29105"/>
        <label>1</label>
    </ligand>
</feature>
<feature type="binding site" evidence="1">
    <location>
        <position position="101"/>
    </location>
    <ligand>
        <name>Zn(2+)</name>
        <dbReference type="ChEBI" id="CHEBI:29105"/>
        <label>2</label>
    </ligand>
</feature>
<feature type="binding site" evidence="1">
    <location>
        <position position="136"/>
    </location>
    <ligand>
        <name>Zn(2+)</name>
        <dbReference type="ChEBI" id="CHEBI:29105"/>
        <label>2</label>
    </ligand>
</feature>
<feature type="binding site" evidence="1">
    <location>
        <position position="164"/>
    </location>
    <ligand>
        <name>Zn(2+)</name>
        <dbReference type="ChEBI" id="CHEBI:29105"/>
        <label>1</label>
    </ligand>
</feature>
<feature type="binding site" evidence="1">
    <location>
        <position position="350"/>
    </location>
    <ligand>
        <name>Zn(2+)</name>
        <dbReference type="ChEBI" id="CHEBI:29105"/>
        <label>2</label>
    </ligand>
</feature>
<feature type="helix" evidence="6">
    <location>
        <begin position="5"/>
        <end position="14"/>
    </location>
</feature>
<feature type="helix" evidence="6">
    <location>
        <begin position="26"/>
        <end position="35"/>
    </location>
</feature>
<feature type="turn" evidence="6">
    <location>
        <begin position="36"/>
        <end position="38"/>
    </location>
</feature>
<feature type="strand" evidence="6">
    <location>
        <begin position="40"/>
        <end position="43"/>
    </location>
</feature>
<feature type="strand" evidence="6">
    <location>
        <begin position="51"/>
        <end position="56"/>
    </location>
</feature>
<feature type="strand" evidence="6">
    <location>
        <begin position="58"/>
        <end position="60"/>
    </location>
</feature>
<feature type="strand" evidence="6">
    <location>
        <begin position="62"/>
        <end position="68"/>
    </location>
</feature>
<feature type="helix" evidence="6">
    <location>
        <begin position="77"/>
        <end position="79"/>
    </location>
</feature>
<feature type="strand" evidence="6">
    <location>
        <begin position="80"/>
        <end position="82"/>
    </location>
</feature>
<feature type="strand" evidence="6">
    <location>
        <begin position="88"/>
        <end position="90"/>
    </location>
</feature>
<feature type="strand" evidence="6">
    <location>
        <begin position="93"/>
        <end position="96"/>
    </location>
</feature>
<feature type="turn" evidence="6">
    <location>
        <begin position="97"/>
        <end position="102"/>
    </location>
</feature>
<feature type="helix" evidence="6">
    <location>
        <begin position="103"/>
        <end position="119"/>
    </location>
</feature>
<feature type="strand" evidence="6">
    <location>
        <begin position="124"/>
        <end position="133"/>
    </location>
</feature>
<feature type="strand" evidence="6">
    <location>
        <begin position="135"/>
        <end position="137"/>
    </location>
</feature>
<feature type="strand" evidence="5">
    <location>
        <begin position="140"/>
        <end position="142"/>
    </location>
</feature>
<feature type="helix" evidence="6">
    <location>
        <begin position="143"/>
        <end position="152"/>
    </location>
</feature>
<feature type="strand" evidence="6">
    <location>
        <begin position="157"/>
        <end position="162"/>
    </location>
</feature>
<feature type="strand" evidence="6">
    <location>
        <begin position="167"/>
        <end position="170"/>
    </location>
</feature>
<feature type="strand" evidence="6">
    <location>
        <begin position="173"/>
        <end position="179"/>
    </location>
</feature>
<feature type="strand" evidence="6">
    <location>
        <begin position="181"/>
        <end position="190"/>
    </location>
</feature>
<feature type="helix" evidence="6">
    <location>
        <begin position="199"/>
        <end position="201"/>
    </location>
</feature>
<feature type="helix" evidence="6">
    <location>
        <begin position="205"/>
        <end position="218"/>
    </location>
</feature>
<feature type="strand" evidence="6">
    <location>
        <begin position="232"/>
        <end position="240"/>
    </location>
</feature>
<feature type="strand" evidence="6">
    <location>
        <begin position="250"/>
        <end position="260"/>
    </location>
</feature>
<feature type="helix" evidence="6">
    <location>
        <begin position="266"/>
        <end position="279"/>
    </location>
</feature>
<feature type="strand" evidence="6">
    <location>
        <begin position="284"/>
        <end position="292"/>
    </location>
</feature>
<feature type="helix" evidence="6">
    <location>
        <begin position="301"/>
        <end position="314"/>
    </location>
</feature>
<feature type="strand" evidence="6">
    <location>
        <begin position="319"/>
        <end position="321"/>
    </location>
</feature>
<feature type="helix" evidence="6">
    <location>
        <begin position="329"/>
        <end position="332"/>
    </location>
</feature>
<feature type="helix" evidence="6">
    <location>
        <begin position="333"/>
        <end position="335"/>
    </location>
</feature>
<feature type="strand" evidence="6">
    <location>
        <begin position="336"/>
        <end position="341"/>
    </location>
</feature>
<feature type="turn" evidence="6">
    <location>
        <begin position="347"/>
        <end position="350"/>
    </location>
</feature>
<feature type="strand" evidence="6">
    <location>
        <begin position="355"/>
        <end position="357"/>
    </location>
</feature>
<feature type="helix" evidence="6">
    <location>
        <begin position="360"/>
        <end position="376"/>
    </location>
</feature>
<organism>
    <name type="scientific">Neisseria meningitidis serogroup B (strain ATCC BAA-335 / MC58)</name>
    <dbReference type="NCBI Taxonomy" id="122586"/>
    <lineage>
        <taxon>Bacteria</taxon>
        <taxon>Pseudomonadati</taxon>
        <taxon>Pseudomonadota</taxon>
        <taxon>Betaproteobacteria</taxon>
        <taxon>Neisseriales</taxon>
        <taxon>Neisseriaceae</taxon>
        <taxon>Neisseria</taxon>
    </lineage>
</organism>
<dbReference type="EC" id="3.5.1.18"/>
<dbReference type="EMBL" id="AE002098">
    <property type="protein sequence ID" value="AAF41885.1"/>
    <property type="molecule type" value="Genomic_DNA"/>
</dbReference>
<dbReference type="PIR" id="F81073">
    <property type="entry name" value="F81073"/>
</dbReference>
<dbReference type="RefSeq" id="NP_274537.1">
    <property type="nucleotide sequence ID" value="NC_003112.2"/>
</dbReference>
<dbReference type="RefSeq" id="WP_002225058.1">
    <property type="nucleotide sequence ID" value="NC_003112.2"/>
</dbReference>
<dbReference type="PDB" id="1VGY">
    <property type="method" value="X-ray"/>
    <property type="resolution" value="1.90 A"/>
    <property type="chains" value="A/B=2-381"/>
</dbReference>
<dbReference type="PDB" id="4O23">
    <property type="method" value="X-ray"/>
    <property type="resolution" value="2.09 A"/>
    <property type="chains" value="A/B=1-381"/>
</dbReference>
<dbReference type="PDB" id="4PPZ">
    <property type="method" value="X-ray"/>
    <property type="resolution" value="2.00 A"/>
    <property type="chains" value="A=1-381"/>
</dbReference>
<dbReference type="PDB" id="4PQA">
    <property type="method" value="X-ray"/>
    <property type="resolution" value="1.78 A"/>
    <property type="chains" value="A=1-381"/>
</dbReference>
<dbReference type="PDB" id="5UEJ">
    <property type="method" value="X-ray"/>
    <property type="resolution" value="1.30 A"/>
    <property type="chains" value="A/B=1-381"/>
</dbReference>
<dbReference type="PDBsum" id="1VGY"/>
<dbReference type="PDBsum" id="4O23"/>
<dbReference type="PDBsum" id="4PPZ"/>
<dbReference type="PDBsum" id="4PQA"/>
<dbReference type="PDBsum" id="5UEJ"/>
<dbReference type="SMR" id="Q9JYL2"/>
<dbReference type="FunCoup" id="Q9JYL2">
    <property type="interactions" value="384"/>
</dbReference>
<dbReference type="STRING" id="122586.NMB1530"/>
<dbReference type="PaxDb" id="122586-NMB1530"/>
<dbReference type="DNASU" id="904046"/>
<dbReference type="KEGG" id="nme:NMB1530"/>
<dbReference type="PATRIC" id="fig|122586.8.peg.1942"/>
<dbReference type="HOGENOM" id="CLU_021802_4_0_4"/>
<dbReference type="InParanoid" id="Q9JYL2"/>
<dbReference type="OrthoDB" id="9809784at2"/>
<dbReference type="BRENDA" id="3.5.1.18">
    <property type="organism ID" value="3593"/>
</dbReference>
<dbReference type="UniPathway" id="UPA00034">
    <property type="reaction ID" value="UER00021"/>
</dbReference>
<dbReference type="EvolutionaryTrace" id="Q9JYL2"/>
<dbReference type="Proteomes" id="UP000000425">
    <property type="component" value="Chromosome"/>
</dbReference>
<dbReference type="GO" id="GO:0008777">
    <property type="term" value="F:acetylornithine deacetylase activity"/>
    <property type="evidence" value="ECO:0000318"/>
    <property type="project" value="GO_Central"/>
</dbReference>
<dbReference type="GO" id="GO:0050897">
    <property type="term" value="F:cobalt ion binding"/>
    <property type="evidence" value="ECO:0007669"/>
    <property type="project" value="UniProtKB-UniRule"/>
</dbReference>
<dbReference type="GO" id="GO:0009014">
    <property type="term" value="F:succinyl-diaminopimelate desuccinylase activity"/>
    <property type="evidence" value="ECO:0007669"/>
    <property type="project" value="UniProtKB-UniRule"/>
</dbReference>
<dbReference type="GO" id="GO:0008270">
    <property type="term" value="F:zinc ion binding"/>
    <property type="evidence" value="ECO:0007669"/>
    <property type="project" value="UniProtKB-UniRule"/>
</dbReference>
<dbReference type="GO" id="GO:0019877">
    <property type="term" value="P:diaminopimelate biosynthetic process"/>
    <property type="evidence" value="ECO:0007669"/>
    <property type="project" value="UniProtKB-UniRule"/>
</dbReference>
<dbReference type="GO" id="GO:0006526">
    <property type="term" value="P:L-arginine biosynthetic process"/>
    <property type="evidence" value="ECO:0000318"/>
    <property type="project" value="GO_Central"/>
</dbReference>
<dbReference type="GO" id="GO:0009089">
    <property type="term" value="P:lysine biosynthetic process via diaminopimelate"/>
    <property type="evidence" value="ECO:0007669"/>
    <property type="project" value="UniProtKB-UniRule"/>
</dbReference>
<dbReference type="CDD" id="cd03891">
    <property type="entry name" value="M20_DapE_proteobac"/>
    <property type="match status" value="1"/>
</dbReference>
<dbReference type="FunFam" id="3.30.70.360:FF:000011">
    <property type="entry name" value="Succinyl-diaminopimelate desuccinylase"/>
    <property type="match status" value="1"/>
</dbReference>
<dbReference type="FunFam" id="3.40.630.10:FF:000005">
    <property type="entry name" value="Succinyl-diaminopimelate desuccinylase"/>
    <property type="match status" value="1"/>
</dbReference>
<dbReference type="FunFam" id="3.40.630.10:FF:000010">
    <property type="entry name" value="Succinyl-diaminopimelate desuccinylase"/>
    <property type="match status" value="1"/>
</dbReference>
<dbReference type="Gene3D" id="3.40.630.10">
    <property type="entry name" value="Zn peptidases"/>
    <property type="match status" value="2"/>
</dbReference>
<dbReference type="HAMAP" id="MF_01690">
    <property type="entry name" value="DapE"/>
    <property type="match status" value="1"/>
</dbReference>
<dbReference type="InterPro" id="IPR036264">
    <property type="entry name" value="Bact_exopeptidase_dim_dom"/>
</dbReference>
<dbReference type="InterPro" id="IPR005941">
    <property type="entry name" value="DapE_proteobac"/>
</dbReference>
<dbReference type="InterPro" id="IPR002933">
    <property type="entry name" value="Peptidase_M20"/>
</dbReference>
<dbReference type="InterPro" id="IPR011650">
    <property type="entry name" value="Peptidase_M20_dimer"/>
</dbReference>
<dbReference type="InterPro" id="IPR050072">
    <property type="entry name" value="Peptidase_M20A"/>
</dbReference>
<dbReference type="NCBIfam" id="TIGR01246">
    <property type="entry name" value="dapE_proteo"/>
    <property type="match status" value="1"/>
</dbReference>
<dbReference type="NCBIfam" id="NF009557">
    <property type="entry name" value="PRK13009.1"/>
    <property type="match status" value="1"/>
</dbReference>
<dbReference type="PANTHER" id="PTHR43808">
    <property type="entry name" value="ACETYLORNITHINE DEACETYLASE"/>
    <property type="match status" value="1"/>
</dbReference>
<dbReference type="PANTHER" id="PTHR43808:SF31">
    <property type="entry name" value="N-ACETYL-L-CITRULLINE DEACETYLASE"/>
    <property type="match status" value="1"/>
</dbReference>
<dbReference type="Pfam" id="PF07687">
    <property type="entry name" value="M20_dimer"/>
    <property type="match status" value="1"/>
</dbReference>
<dbReference type="Pfam" id="PF01546">
    <property type="entry name" value="Peptidase_M20"/>
    <property type="match status" value="1"/>
</dbReference>
<dbReference type="SUPFAM" id="SSF55031">
    <property type="entry name" value="Bacterial exopeptidase dimerisation domain"/>
    <property type="match status" value="1"/>
</dbReference>
<dbReference type="SUPFAM" id="SSF53187">
    <property type="entry name" value="Zn-dependent exopeptidases"/>
    <property type="match status" value="1"/>
</dbReference>